<dbReference type="EC" id="1.14.99.46" evidence="1"/>
<dbReference type="EMBL" id="CP000468">
    <property type="protein sequence ID" value="ABJ00407.1"/>
    <property type="molecule type" value="Genomic_DNA"/>
</dbReference>
<dbReference type="SMR" id="A1A9R7"/>
<dbReference type="KEGG" id="ecv:APECO1_103"/>
<dbReference type="HOGENOM" id="CLU_027853_1_1_6"/>
<dbReference type="Proteomes" id="UP000008216">
    <property type="component" value="Chromosome"/>
</dbReference>
<dbReference type="GO" id="GO:0008726">
    <property type="term" value="F:alkanesulfonate monooxygenase activity"/>
    <property type="evidence" value="ECO:0007669"/>
    <property type="project" value="TreeGrafter"/>
</dbReference>
<dbReference type="GO" id="GO:0052614">
    <property type="term" value="F:uracil oxygenase activity"/>
    <property type="evidence" value="ECO:0007669"/>
    <property type="project" value="UniProtKB-EC"/>
</dbReference>
<dbReference type="GO" id="GO:0046306">
    <property type="term" value="P:alkanesulfonate catabolic process"/>
    <property type="evidence" value="ECO:0007669"/>
    <property type="project" value="TreeGrafter"/>
</dbReference>
<dbReference type="GO" id="GO:0019740">
    <property type="term" value="P:nitrogen utilization"/>
    <property type="evidence" value="ECO:0007669"/>
    <property type="project" value="UniProtKB-UniRule"/>
</dbReference>
<dbReference type="GO" id="GO:0006212">
    <property type="term" value="P:uracil catabolic process"/>
    <property type="evidence" value="ECO:0007669"/>
    <property type="project" value="UniProtKB-UniRule"/>
</dbReference>
<dbReference type="CDD" id="cd01094">
    <property type="entry name" value="Alkanesulfonate_monoxygenase"/>
    <property type="match status" value="1"/>
</dbReference>
<dbReference type="FunFam" id="3.20.20.30:FF:000003">
    <property type="entry name" value="Pyrimidine monooxygenase RutA"/>
    <property type="match status" value="1"/>
</dbReference>
<dbReference type="Gene3D" id="3.20.20.30">
    <property type="entry name" value="Luciferase-like domain"/>
    <property type="match status" value="1"/>
</dbReference>
<dbReference type="HAMAP" id="MF_01699">
    <property type="entry name" value="RutA"/>
    <property type="match status" value="1"/>
</dbReference>
<dbReference type="InterPro" id="IPR011251">
    <property type="entry name" value="Luciferase-like_dom"/>
</dbReference>
<dbReference type="InterPro" id="IPR036661">
    <property type="entry name" value="Luciferase-like_sf"/>
</dbReference>
<dbReference type="InterPro" id="IPR019914">
    <property type="entry name" value="Pyrimidine_monooxygenase_RutA"/>
</dbReference>
<dbReference type="InterPro" id="IPR050172">
    <property type="entry name" value="SsuD_RutA_monooxygenase"/>
</dbReference>
<dbReference type="NCBIfam" id="TIGR03612">
    <property type="entry name" value="RutA"/>
    <property type="match status" value="1"/>
</dbReference>
<dbReference type="PANTHER" id="PTHR42847">
    <property type="entry name" value="ALKANESULFONATE MONOOXYGENASE"/>
    <property type="match status" value="1"/>
</dbReference>
<dbReference type="PANTHER" id="PTHR42847:SF4">
    <property type="entry name" value="ALKANESULFONATE MONOOXYGENASE-RELATED"/>
    <property type="match status" value="1"/>
</dbReference>
<dbReference type="Pfam" id="PF00296">
    <property type="entry name" value="Bac_luciferase"/>
    <property type="match status" value="1"/>
</dbReference>
<dbReference type="SUPFAM" id="SSF51679">
    <property type="entry name" value="Bacterial luciferase-like"/>
    <property type="match status" value="1"/>
</dbReference>
<keyword id="KW-0285">Flavoprotein</keyword>
<keyword id="KW-0288">FMN</keyword>
<keyword id="KW-0503">Monooxygenase</keyword>
<keyword id="KW-0521">NADP</keyword>
<keyword id="KW-0560">Oxidoreductase</keyword>
<keyword id="KW-1185">Reference proteome</keyword>
<reference key="1">
    <citation type="journal article" date="2007" name="J. Bacteriol.">
        <title>The genome sequence of avian pathogenic Escherichia coli strain O1:K1:H7 shares strong similarities with human extraintestinal pathogenic E. coli genomes.</title>
        <authorList>
            <person name="Johnson T.J."/>
            <person name="Kariyawasam S."/>
            <person name="Wannemuehler Y."/>
            <person name="Mangiamele P."/>
            <person name="Johnson S.J."/>
            <person name="Doetkott C."/>
            <person name="Skyberg J.A."/>
            <person name="Lynne A.M."/>
            <person name="Johnson J.R."/>
            <person name="Nolan L.K."/>
        </authorList>
    </citation>
    <scope>NUCLEOTIDE SEQUENCE [LARGE SCALE GENOMIC DNA]</scope>
</reference>
<organism>
    <name type="scientific">Escherichia coli O1:K1 / APEC</name>
    <dbReference type="NCBI Taxonomy" id="405955"/>
    <lineage>
        <taxon>Bacteria</taxon>
        <taxon>Pseudomonadati</taxon>
        <taxon>Pseudomonadota</taxon>
        <taxon>Gammaproteobacteria</taxon>
        <taxon>Enterobacterales</taxon>
        <taxon>Enterobacteriaceae</taxon>
        <taxon>Escherichia</taxon>
    </lineage>
</organism>
<sequence>MQDAAPRLTFTLRDEERLMMKIGVFVPIGNNGWLISTHAPQYMPTFELNKAIVQKAEHYHFDFALSMIKLRGFGGKTEFWDHNLESFTLMAGLAAVTSRIQIYATAATLTLPPAIVARMAATIDSISGGRFGVNLVTGWQKPEYEQMGIWPGDDYFSRRYDYLTEYVQVLRDLWGSGKSDFKGDFFTMDDCRVSPQPSVPMKVICAGQSDAGMAFSARYADFNFCFGKGVNTPTAFAPTAARMKQAAEQTGRDVGSYVLFMVIADETDDAARAKWEHYKAGADEEALSWLTEQSQKDTRSGTDTNVRQMADPTSAVNINMGTLVGSYASVARMLDEVASVPGAEGVLLTFDDFLSGIENFGERIQPLMQCRAHLPALTQEVA</sequence>
<comment type="function">
    <text evidence="1">Catalyzes the pyrimidine ring opening between N-3 and C-4 by an unusual flavin hydroperoxide-catalyzed mechanism, adding oxygen atoms in the process to yield ureidoacrylate peracid, that immediately reacts with FMN forming ureidoacrylate and FMN-N(5)-oxide. The FMN-N(5)-oxide reacts spontaneously with NADH to produce FMN. Requires the flavin reductase RutF to regenerate FMN in vivo.</text>
</comment>
<comment type="catalytic activity">
    <reaction evidence="1">
        <text>uracil + FMNH2 + NADH + O2 = (Z)-3-ureidoacrylate + FMN + NAD(+) + H2O + H(+)</text>
        <dbReference type="Rhea" id="RHEA:31587"/>
        <dbReference type="ChEBI" id="CHEBI:15377"/>
        <dbReference type="ChEBI" id="CHEBI:15378"/>
        <dbReference type="ChEBI" id="CHEBI:15379"/>
        <dbReference type="ChEBI" id="CHEBI:17568"/>
        <dbReference type="ChEBI" id="CHEBI:57540"/>
        <dbReference type="ChEBI" id="CHEBI:57618"/>
        <dbReference type="ChEBI" id="CHEBI:57945"/>
        <dbReference type="ChEBI" id="CHEBI:58210"/>
        <dbReference type="ChEBI" id="CHEBI:59891"/>
        <dbReference type="EC" id="1.14.99.46"/>
    </reaction>
</comment>
<comment type="catalytic activity">
    <reaction evidence="1">
        <text>thymine + FMNH2 + NADH + O2 = (Z)-2-methylureidoacrylate + FMN + NAD(+) + H2O + H(+)</text>
        <dbReference type="Rhea" id="RHEA:31599"/>
        <dbReference type="ChEBI" id="CHEBI:15377"/>
        <dbReference type="ChEBI" id="CHEBI:15378"/>
        <dbReference type="ChEBI" id="CHEBI:15379"/>
        <dbReference type="ChEBI" id="CHEBI:17821"/>
        <dbReference type="ChEBI" id="CHEBI:57540"/>
        <dbReference type="ChEBI" id="CHEBI:57618"/>
        <dbReference type="ChEBI" id="CHEBI:57945"/>
        <dbReference type="ChEBI" id="CHEBI:58210"/>
        <dbReference type="ChEBI" id="CHEBI:143783"/>
        <dbReference type="EC" id="1.14.99.46"/>
    </reaction>
</comment>
<comment type="induction">
    <text evidence="1">Up-regulated by the nitrogen regulatory protein C (NtrC also called GlnG) and repressed by RutR.</text>
</comment>
<comment type="similarity">
    <text evidence="1">Belongs to the NtaA/SnaA/DszA monooxygenase family. RutA subfamily.</text>
</comment>
<evidence type="ECO:0000255" key="1">
    <source>
        <dbReference type="HAMAP-Rule" id="MF_01699"/>
    </source>
</evidence>
<protein>
    <recommendedName>
        <fullName evidence="1">Pyrimidine monooxygenase RutA</fullName>
        <ecNumber evidence="1">1.14.99.46</ecNumber>
    </recommendedName>
</protein>
<name>RUTA_ECOK1</name>
<feature type="chain" id="PRO_0000402613" description="Pyrimidine monooxygenase RutA">
    <location>
        <begin position="1"/>
        <end position="382"/>
    </location>
</feature>
<feature type="binding site" evidence="1">
    <location>
        <begin position="68"/>
        <end position="69"/>
    </location>
    <ligand>
        <name>FMN</name>
        <dbReference type="ChEBI" id="CHEBI:58210"/>
    </ligand>
</feature>
<feature type="binding site" evidence="1">
    <location>
        <position position="134"/>
    </location>
    <ligand>
        <name>FMN</name>
        <dbReference type="ChEBI" id="CHEBI:58210"/>
    </ligand>
</feature>
<feature type="binding site" evidence="1">
    <location>
        <position position="143"/>
    </location>
    <ligand>
        <name>FMN</name>
        <dbReference type="ChEBI" id="CHEBI:58210"/>
    </ligand>
</feature>
<feature type="binding site" evidence="1">
    <location>
        <begin position="159"/>
        <end position="160"/>
    </location>
    <ligand>
        <name>FMN</name>
        <dbReference type="ChEBI" id="CHEBI:58210"/>
    </ligand>
</feature>
<feature type="binding site" evidence="1">
    <location>
        <position position="209"/>
    </location>
    <ligand>
        <name>FMN</name>
        <dbReference type="ChEBI" id="CHEBI:58210"/>
    </ligand>
</feature>
<proteinExistence type="inferred from homology"/>
<gene>
    <name evidence="1" type="primary">rutA</name>
    <name type="ordered locus">Ecok1_09130</name>
    <name type="ORF">APECO1_103</name>
</gene>
<accession>A1A9R7</accession>